<keyword id="KW-0472">Membrane</keyword>
<keyword id="KW-0602">Photosynthesis</keyword>
<keyword id="KW-0603">Photosystem I</keyword>
<keyword id="KW-0793">Thylakoid</keyword>
<keyword id="KW-0812">Transmembrane</keyword>
<keyword id="KW-1133">Transmembrane helix</keyword>
<dbReference type="EMBL" id="CP000825">
    <property type="protein sequence ID" value="ABV51400.1"/>
    <property type="molecule type" value="Genomic_DNA"/>
</dbReference>
<dbReference type="RefSeq" id="WP_012008414.1">
    <property type="nucleotide sequence ID" value="NC_009840.1"/>
</dbReference>
<dbReference type="SMR" id="A8G719"/>
<dbReference type="STRING" id="93060.P9215_17871"/>
<dbReference type="KEGG" id="pmh:P9215_17871"/>
<dbReference type="eggNOG" id="ENOG5033UPE">
    <property type="taxonomic scope" value="Bacteria"/>
</dbReference>
<dbReference type="HOGENOM" id="CLU_092204_1_0_3"/>
<dbReference type="OrthoDB" id="464381at2"/>
<dbReference type="Proteomes" id="UP000002014">
    <property type="component" value="Chromosome"/>
</dbReference>
<dbReference type="GO" id="GO:0009538">
    <property type="term" value="C:photosystem I reaction center"/>
    <property type="evidence" value="ECO:0007669"/>
    <property type="project" value="InterPro"/>
</dbReference>
<dbReference type="GO" id="GO:0031676">
    <property type="term" value="C:plasma membrane-derived thylakoid membrane"/>
    <property type="evidence" value="ECO:0007669"/>
    <property type="project" value="UniProtKB-SubCell"/>
</dbReference>
<dbReference type="GO" id="GO:0015979">
    <property type="term" value="P:photosynthesis"/>
    <property type="evidence" value="ECO:0007669"/>
    <property type="project" value="UniProtKB-UniRule"/>
</dbReference>
<dbReference type="Gene3D" id="1.20.1240.10">
    <property type="entry name" value="Photosystem I PsaL, reaction centre subunit XI"/>
    <property type="match status" value="1"/>
</dbReference>
<dbReference type="HAMAP" id="MF_00447">
    <property type="entry name" value="PSI_PsaL"/>
    <property type="match status" value="1"/>
</dbReference>
<dbReference type="InterPro" id="IPR003757">
    <property type="entry name" value="PSI_PsaL"/>
</dbReference>
<dbReference type="InterPro" id="IPR036592">
    <property type="entry name" value="PSI_PsaL_sf"/>
</dbReference>
<dbReference type="InterPro" id="IPR022980">
    <property type="entry name" value="PSI_suXI"/>
</dbReference>
<dbReference type="NCBIfam" id="NF001925">
    <property type="entry name" value="PRK00704.1-1"/>
    <property type="match status" value="1"/>
</dbReference>
<dbReference type="NCBIfam" id="NF001928">
    <property type="entry name" value="PRK00704.1-5"/>
    <property type="match status" value="1"/>
</dbReference>
<dbReference type="PANTHER" id="PTHR34803">
    <property type="entry name" value="PHOTOSYSTEM I REACTION CENTER SUBUNIT XI, CHLOROPLASTIC"/>
    <property type="match status" value="1"/>
</dbReference>
<dbReference type="PANTHER" id="PTHR34803:SF2">
    <property type="entry name" value="PHOTOSYSTEM I REACTION CENTER SUBUNIT XI, CHLOROPLASTIC"/>
    <property type="match status" value="1"/>
</dbReference>
<dbReference type="Pfam" id="PF02605">
    <property type="entry name" value="PsaL"/>
    <property type="match status" value="1"/>
</dbReference>
<dbReference type="SUPFAM" id="SSF81568">
    <property type="entry name" value="Photosystem I reaction center subunit XI, PsaL"/>
    <property type="match status" value="1"/>
</dbReference>
<evidence type="ECO:0000255" key="1">
    <source>
        <dbReference type="HAMAP-Rule" id="MF_00447"/>
    </source>
</evidence>
<organism>
    <name type="scientific">Prochlorococcus marinus (strain MIT 9215)</name>
    <dbReference type="NCBI Taxonomy" id="93060"/>
    <lineage>
        <taxon>Bacteria</taxon>
        <taxon>Bacillati</taxon>
        <taxon>Cyanobacteriota</taxon>
        <taxon>Cyanophyceae</taxon>
        <taxon>Synechococcales</taxon>
        <taxon>Prochlorococcaceae</taxon>
        <taxon>Prochlorococcus</taxon>
    </lineage>
</organism>
<protein>
    <recommendedName>
        <fullName evidence="1">Photosystem I reaction center subunit XI</fullName>
    </recommendedName>
    <alternativeName>
        <fullName evidence="1">PSI subunit V</fullName>
    </alternativeName>
    <alternativeName>
        <fullName evidence="1">PSI-L</fullName>
    </alternativeName>
</protein>
<accession>A8G719</accession>
<name>PSAL_PROM2</name>
<feature type="chain" id="PRO_1000060278" description="Photosystem I reaction center subunit XI">
    <location>
        <begin position="1"/>
        <end position="199"/>
    </location>
</feature>
<feature type="transmembrane region" description="Helical" evidence="1">
    <location>
        <begin position="108"/>
        <end position="128"/>
    </location>
</feature>
<feature type="transmembrane region" description="Helical" evidence="1">
    <location>
        <begin position="165"/>
        <end position="185"/>
    </location>
</feature>
<proteinExistence type="inferred from homology"/>
<sequence length="199" mass="21421">MSDFQKSFSESTSSIKFDEKYIDNSVQPNDIGVADQWAVKTVDDPCVGNLATPVNSGYFTKAFINNLPFYREGISPNFRGLETGAAFGYLLYGPFTMTGPLRNSEFAVTAGLLSAIGAVHIMTALLVLYNAPGKAPNVQPPDATVNNPPKDLFTRAGWADFTSGFWLGGCGGAVFAWLLVGTLHLDTLMPIIKNIWTAG</sequence>
<reference key="1">
    <citation type="journal article" date="2007" name="PLoS Genet.">
        <title>Patterns and implications of gene gain and loss in the evolution of Prochlorococcus.</title>
        <authorList>
            <person name="Kettler G.C."/>
            <person name="Martiny A.C."/>
            <person name="Huang K."/>
            <person name="Zucker J."/>
            <person name="Coleman M.L."/>
            <person name="Rodrigue S."/>
            <person name="Chen F."/>
            <person name="Lapidus A."/>
            <person name="Ferriera S."/>
            <person name="Johnson J."/>
            <person name="Steglich C."/>
            <person name="Church G.M."/>
            <person name="Richardson P."/>
            <person name="Chisholm S.W."/>
        </authorList>
    </citation>
    <scope>NUCLEOTIDE SEQUENCE [LARGE SCALE GENOMIC DNA]</scope>
    <source>
        <strain>MIT 9215</strain>
    </source>
</reference>
<gene>
    <name evidence="1" type="primary">psaL</name>
    <name type="ordered locus">P9215_17871</name>
</gene>
<comment type="subcellular location">
    <subcellularLocation>
        <location evidence="1">Cellular thylakoid membrane</location>
        <topology evidence="1">Multi-pass membrane protein</topology>
    </subcellularLocation>
</comment>
<comment type="similarity">
    <text evidence="1">Belongs to the PsaL family.</text>
</comment>